<dbReference type="EC" id="1.1.1.1" evidence="2 3"/>
<dbReference type="EMBL" id="AJ441109">
    <property type="protein sequence ID" value="CAD29583.1"/>
    <property type="molecule type" value="Genomic_DNA"/>
</dbReference>
<dbReference type="PDB" id="4Z6K">
    <property type="method" value="X-ray"/>
    <property type="resolution" value="1.90 A"/>
    <property type="chains" value="A/B/C/D=1-338"/>
</dbReference>
<dbReference type="PDBsum" id="4Z6K"/>
<dbReference type="SMR" id="Q8GIX7"/>
<dbReference type="BRENDA" id="1.1.1.1">
    <property type="organism ID" value="3421"/>
</dbReference>
<dbReference type="GO" id="GO:1990362">
    <property type="term" value="F:butanol dehydrogenase (NAD+) activity"/>
    <property type="evidence" value="ECO:0007669"/>
    <property type="project" value="RHEA"/>
</dbReference>
<dbReference type="GO" id="GO:0120542">
    <property type="term" value="F:ethanol dehydrogenase (NAD+) activity"/>
    <property type="evidence" value="ECO:0007669"/>
    <property type="project" value="RHEA"/>
</dbReference>
<dbReference type="GO" id="GO:0008270">
    <property type="term" value="F:zinc ion binding"/>
    <property type="evidence" value="ECO:0007669"/>
    <property type="project" value="InterPro"/>
</dbReference>
<dbReference type="CDD" id="cd08297">
    <property type="entry name" value="CAD3"/>
    <property type="match status" value="1"/>
</dbReference>
<dbReference type="FunFam" id="3.40.50.720:FF:000039">
    <property type="entry name" value="Alcohol dehydrogenase AdhP"/>
    <property type="match status" value="1"/>
</dbReference>
<dbReference type="FunFam" id="3.90.180.10:FF:000002">
    <property type="entry name" value="Alcohol dehydrogenase AdhP"/>
    <property type="match status" value="1"/>
</dbReference>
<dbReference type="Gene3D" id="3.90.180.10">
    <property type="entry name" value="Medium-chain alcohol dehydrogenases, catalytic domain"/>
    <property type="match status" value="1"/>
</dbReference>
<dbReference type="Gene3D" id="3.40.50.720">
    <property type="entry name" value="NAD(P)-binding Rossmann-like Domain"/>
    <property type="match status" value="1"/>
</dbReference>
<dbReference type="InterPro" id="IPR013149">
    <property type="entry name" value="ADH-like_C"/>
</dbReference>
<dbReference type="InterPro" id="IPR013154">
    <property type="entry name" value="ADH-like_N"/>
</dbReference>
<dbReference type="InterPro" id="IPR002328">
    <property type="entry name" value="ADH_Zn_CS"/>
</dbReference>
<dbReference type="InterPro" id="IPR011032">
    <property type="entry name" value="GroES-like_sf"/>
</dbReference>
<dbReference type="InterPro" id="IPR036291">
    <property type="entry name" value="NAD(P)-bd_dom_sf"/>
</dbReference>
<dbReference type="InterPro" id="IPR020843">
    <property type="entry name" value="PKS_ER"/>
</dbReference>
<dbReference type="NCBIfam" id="NF006940">
    <property type="entry name" value="PRK09422.1"/>
    <property type="match status" value="1"/>
</dbReference>
<dbReference type="PANTHER" id="PTHR42940">
    <property type="entry name" value="ALCOHOL DEHYDROGENASE 1-RELATED"/>
    <property type="match status" value="1"/>
</dbReference>
<dbReference type="PANTHER" id="PTHR42940:SF8">
    <property type="entry name" value="VACUOLAR PROTEIN SORTING-ASSOCIATED PROTEIN 11"/>
    <property type="match status" value="1"/>
</dbReference>
<dbReference type="Pfam" id="PF08240">
    <property type="entry name" value="ADH_N"/>
    <property type="match status" value="1"/>
</dbReference>
<dbReference type="Pfam" id="PF00107">
    <property type="entry name" value="ADH_zinc_N"/>
    <property type="match status" value="1"/>
</dbReference>
<dbReference type="SMART" id="SM00829">
    <property type="entry name" value="PKS_ER"/>
    <property type="match status" value="1"/>
</dbReference>
<dbReference type="SUPFAM" id="SSF50129">
    <property type="entry name" value="GroES-like"/>
    <property type="match status" value="1"/>
</dbReference>
<dbReference type="SUPFAM" id="SSF51735">
    <property type="entry name" value="NAD(P)-binding Rossmann-fold domains"/>
    <property type="match status" value="1"/>
</dbReference>
<dbReference type="PROSITE" id="PS00059">
    <property type="entry name" value="ADH_ZINC"/>
    <property type="match status" value="1"/>
</dbReference>
<name>ADH_MORSE</name>
<sequence>MKAAVLHEFGQSLQIEEVDIPTPGAGEIVVKMQASGVCHTDLHAVEGDWPVKPSPPFIPGHEGVGLITAVGEGVTHVKEGDRVGVAWLYSACGHCTHCLGGWETLCESQQNSGYSVNGSFAEYVLANANYVGIIPESVDSIEIAPVLCAGVTVYKGLKMTDTKPGDWVVISGIGGLGHMAVQYAIAMGLNVAAVDIDDDKLAFAKKLGAKVTVNAKNTDPAEYLQKEIGGAHGALVTAVSAKAFDQALSMLRRGGTLVCNGLPPGDFPVSIFDTVLNGITIRGSIVGTRLDLQESLDMAAAGKVKATVTAEPLENINDIFERMRQGKIEGRIVIDYTM</sequence>
<accession>Q8GIX7</accession>
<proteinExistence type="evidence at protein level"/>
<evidence type="ECO:0000269" key="1">
    <source>
    </source>
</evidence>
<evidence type="ECO:0000269" key="2">
    <source>
    </source>
</evidence>
<evidence type="ECO:0000269" key="3">
    <source>
    </source>
</evidence>
<evidence type="ECO:0000303" key="4">
    <source>
    </source>
</evidence>
<evidence type="ECO:0000303" key="5">
    <source>
    </source>
</evidence>
<evidence type="ECO:0000305" key="6"/>
<evidence type="ECO:0000305" key="7">
    <source>
    </source>
</evidence>
<evidence type="ECO:0000305" key="8">
    <source>
    </source>
</evidence>
<evidence type="ECO:0000312" key="9">
    <source>
        <dbReference type="EMBL" id="CAD29583.1"/>
    </source>
</evidence>
<evidence type="ECO:0007744" key="10">
    <source>
        <dbReference type="PDB" id="4Z6K"/>
    </source>
</evidence>
<evidence type="ECO:0007829" key="11">
    <source>
        <dbReference type="PDB" id="4Z6K"/>
    </source>
</evidence>
<keyword id="KW-0002">3D-structure</keyword>
<keyword id="KW-0479">Metal-binding</keyword>
<keyword id="KW-0520">NAD</keyword>
<keyword id="KW-0560">Oxidoreductase</keyword>
<keyword id="KW-0862">Zinc</keyword>
<feature type="chain" id="PRO_0000451116" description="Alcohol dehydrogenase">
    <location>
        <begin position="1"/>
        <end position="338"/>
    </location>
</feature>
<feature type="binding site" evidence="2 10">
    <location>
        <position position="38"/>
    </location>
    <ligand>
        <name>Zn(2+)</name>
        <dbReference type="ChEBI" id="CHEBI:29105"/>
        <label>1</label>
        <note>catalytic</note>
    </ligand>
</feature>
<feature type="binding site" evidence="2 10">
    <location>
        <position position="61"/>
    </location>
    <ligand>
        <name>Zn(2+)</name>
        <dbReference type="ChEBI" id="CHEBI:29105"/>
        <label>1</label>
        <note>catalytic</note>
    </ligand>
</feature>
<feature type="binding site" evidence="2 10">
    <location>
        <position position="62"/>
    </location>
    <ligand>
        <name>Zn(2+)</name>
        <dbReference type="ChEBI" id="CHEBI:29105"/>
        <label>1</label>
        <note>catalytic</note>
    </ligand>
</feature>
<feature type="binding site" evidence="2 10">
    <location>
        <position position="92"/>
    </location>
    <ligand>
        <name>Zn(2+)</name>
        <dbReference type="ChEBI" id="CHEBI:29105"/>
        <label>2</label>
        <note>structural</note>
    </ligand>
</feature>
<feature type="binding site" evidence="2 10">
    <location>
        <position position="95"/>
    </location>
    <ligand>
        <name>Zn(2+)</name>
        <dbReference type="ChEBI" id="CHEBI:29105"/>
        <label>2</label>
        <note>structural</note>
    </ligand>
</feature>
<feature type="binding site" evidence="2 10">
    <location>
        <position position="98"/>
    </location>
    <ligand>
        <name>Zn(2+)</name>
        <dbReference type="ChEBI" id="CHEBI:29105"/>
        <label>2</label>
        <note>structural</note>
    </ligand>
</feature>
<feature type="binding site" evidence="2 10">
    <location>
        <position position="106"/>
    </location>
    <ligand>
        <name>Zn(2+)</name>
        <dbReference type="ChEBI" id="CHEBI:29105"/>
        <label>2</label>
        <note>structural</note>
    </ligand>
</feature>
<feature type="binding site" evidence="2 10">
    <location>
        <position position="148"/>
    </location>
    <ligand>
        <name>Zn(2+)</name>
        <dbReference type="ChEBI" id="CHEBI:29105"/>
        <label>1</label>
        <note>catalytic</note>
    </ligand>
</feature>
<feature type="strand" evidence="11">
    <location>
        <begin position="2"/>
        <end position="6"/>
    </location>
</feature>
<feature type="strand" evidence="11">
    <location>
        <begin position="14"/>
        <end position="17"/>
    </location>
</feature>
<feature type="strand" evidence="11">
    <location>
        <begin position="27"/>
        <end position="37"/>
    </location>
</feature>
<feature type="helix" evidence="11">
    <location>
        <begin position="39"/>
        <end position="46"/>
    </location>
</feature>
<feature type="strand" evidence="11">
    <location>
        <begin position="49"/>
        <end position="51"/>
    </location>
</feature>
<feature type="strand" evidence="11">
    <location>
        <begin position="55"/>
        <end position="57"/>
    </location>
</feature>
<feature type="strand" evidence="11">
    <location>
        <begin position="63"/>
        <end position="70"/>
    </location>
</feature>
<feature type="strand" evidence="11">
    <location>
        <begin position="82"/>
        <end position="85"/>
    </location>
</feature>
<feature type="strand" evidence="11">
    <location>
        <begin position="87"/>
        <end position="90"/>
    </location>
</feature>
<feature type="strand" evidence="11">
    <location>
        <begin position="93"/>
        <end position="95"/>
    </location>
</feature>
<feature type="helix" evidence="11">
    <location>
        <begin position="96"/>
        <end position="99"/>
    </location>
</feature>
<feature type="helix" evidence="11">
    <location>
        <begin position="103"/>
        <end position="105"/>
    </location>
</feature>
<feature type="strand" evidence="11">
    <location>
        <begin position="110"/>
        <end position="112"/>
    </location>
</feature>
<feature type="turn" evidence="11">
    <location>
        <begin position="113"/>
        <end position="115"/>
    </location>
</feature>
<feature type="strand" evidence="11">
    <location>
        <begin position="119"/>
        <end position="127"/>
    </location>
</feature>
<feature type="turn" evidence="11">
    <location>
        <begin position="128"/>
        <end position="130"/>
    </location>
</feature>
<feature type="strand" evidence="11">
    <location>
        <begin position="131"/>
        <end position="133"/>
    </location>
</feature>
<feature type="helix" evidence="11">
    <location>
        <begin position="140"/>
        <end position="143"/>
    </location>
</feature>
<feature type="helix" evidence="11">
    <location>
        <begin position="144"/>
        <end position="147"/>
    </location>
</feature>
<feature type="helix" evidence="11">
    <location>
        <begin position="149"/>
        <end position="158"/>
    </location>
</feature>
<feature type="turn" evidence="11">
    <location>
        <begin position="159"/>
        <end position="161"/>
    </location>
</feature>
<feature type="strand" evidence="11">
    <location>
        <begin position="167"/>
        <end position="171"/>
    </location>
</feature>
<feature type="helix" evidence="11">
    <location>
        <begin position="175"/>
        <end position="186"/>
    </location>
</feature>
<feature type="strand" evidence="11">
    <location>
        <begin position="190"/>
        <end position="196"/>
    </location>
</feature>
<feature type="helix" evidence="11">
    <location>
        <begin position="198"/>
        <end position="206"/>
    </location>
</feature>
<feature type="strand" evidence="11">
    <location>
        <begin position="210"/>
        <end position="214"/>
    </location>
</feature>
<feature type="turn" evidence="11">
    <location>
        <begin position="215"/>
        <end position="217"/>
    </location>
</feature>
<feature type="helix" evidence="11">
    <location>
        <begin position="220"/>
        <end position="228"/>
    </location>
</feature>
<feature type="strand" evidence="11">
    <location>
        <begin position="229"/>
        <end position="238"/>
    </location>
</feature>
<feature type="helix" evidence="11">
    <location>
        <begin position="241"/>
        <end position="250"/>
    </location>
</feature>
<feature type="strand" evidence="11">
    <location>
        <begin position="251"/>
        <end position="259"/>
    </location>
</feature>
<feature type="helix" evidence="11">
    <location>
        <begin position="272"/>
        <end position="276"/>
    </location>
</feature>
<feature type="strand" evidence="11">
    <location>
        <begin position="280"/>
        <end position="283"/>
    </location>
</feature>
<feature type="helix" evidence="11">
    <location>
        <begin position="289"/>
        <end position="300"/>
    </location>
</feature>
<feature type="strand" evidence="11">
    <location>
        <begin position="308"/>
        <end position="311"/>
    </location>
</feature>
<feature type="helix" evidence="11">
    <location>
        <begin position="313"/>
        <end position="315"/>
    </location>
</feature>
<feature type="helix" evidence="11">
    <location>
        <begin position="316"/>
        <end position="324"/>
    </location>
</feature>
<feature type="strand" evidence="11">
    <location>
        <begin position="330"/>
        <end position="335"/>
    </location>
</feature>
<protein>
    <recommendedName>
        <fullName evidence="4 5">Alcohol dehydrogenase</fullName>
        <shortName evidence="4 5">ADH</shortName>
        <ecNumber evidence="2 3">1.1.1.1</ecNumber>
    </recommendedName>
</protein>
<reference key="1">
    <citation type="submission" date="2002-04" db="EMBL/GenBank/DDBJ databases">
        <title>Cold adapted alcohol dehydrogenase from an Antarctic psychrophilic bacterium.</title>
        <authorList>
            <person name="Tsigos I."/>
            <person name="Bouriotis V."/>
        </authorList>
    </citation>
    <scope>NUCLEOTIDE SEQUENCE [GENOMIC DNA]</scope>
    <source>
        <strain>TAE123</strain>
    </source>
</reference>
<reference key="2">
    <citation type="journal article" date="1998" name="Eur. J. Biochem.">
        <title>Purification and characterization of an alcohol dehydrogenase from the Antarctic psychrophile Moraxella sp. TAE123.</title>
        <authorList>
            <person name="Tsigos I."/>
            <person name="Velonia K."/>
            <person name="Smonou I."/>
            <person name="Bouriotis V."/>
        </authorList>
    </citation>
    <scope>FUNCTION</scope>
    <scope>CATALYTIC ACTIVITY</scope>
    <scope>BIOPHYSICOCHEMICAL PROPERTIES</scope>
    <scope>SUBSTRATE SPECIFICITY</scope>
    <scope>SUBUNIT</scope>
    <source>
        <strain>TAE123</strain>
    </source>
</reference>
<reference key="3">
    <citation type="journal article" date="1999" name="Bioorg. Med. Chem. Lett.">
        <title>Stereospecificity of hydrogen transfer by the NAD+-linked alcohol dehydrogenase from the antarctic psychrophile Moraxella sp. TAE123.</title>
        <authorList>
            <person name="Velonia K."/>
            <person name="Tsigos I."/>
            <person name="Bouriotis V."/>
            <person name="Smonou I."/>
        </authorList>
    </citation>
    <scope>IDENTIFICATION AS A TYPE-A DEHYDROGENASE</scope>
    <source>
        <strain>TAE123</strain>
    </source>
</reference>
<reference key="4">
    <citation type="journal article" date="2005" name="Acta Crystallogr. F">
        <title>Crystallization and preliminary X-ray diffraction studies of an alcohol dehydrogenase from the Antarctic psychrophile Moraxella sp. TAE123.</title>
        <authorList>
            <person name="Papanikolau Y."/>
            <person name="Tsigos I."/>
            <person name="Papadovasilaki M."/>
            <person name="Bouriotis V."/>
            <person name="Petratos K."/>
        </authorList>
    </citation>
    <scope>SUBUNIT</scope>
    <scope>COFACTOR</scope>
    <scope>CRYSTALLIZATION</scope>
    <source>
        <strain>TAE123</strain>
    </source>
</reference>
<reference evidence="10" key="5">
    <citation type="journal article" date="2020" name="ACS Omega">
        <title>Structure and Dynamics of a Thermostable Alcohol Dehydrogenase from the Antarctic Psychrophile Moraxella sp. TAE123.</title>
        <authorList>
            <person name="Petratos K."/>
            <person name="Gessmann R."/>
            <person name="Daskalakis V."/>
            <person name="Papadovasilaki M."/>
            <person name="Papanikolau Y."/>
            <person name="Tsigos I."/>
            <person name="Bouriotis V."/>
        </authorList>
    </citation>
    <scope>X-RAY CRYSTALLOGRAPHY (1.90 ANGSTROMS) IN COMPLEX WITH ZINC</scope>
    <scope>CATALYTIC ACTIVITY</scope>
    <scope>BIOPHYSICOCHEMICAL PROPERTIES</scope>
    <scope>COFACTOR</scope>
    <scope>SUBUNIT</scope>
    <scope>DOMAIN</scope>
    <source>
        <strain>TAE123</strain>
    </source>
</reference>
<gene>
    <name evidence="9" type="primary">adh</name>
</gene>
<organism>
    <name type="scientific">Moraxella sp. (strain TAE123)</name>
    <dbReference type="NCBI Taxonomy" id="191545"/>
    <lineage>
        <taxon>Bacteria</taxon>
        <taxon>Pseudomonadati</taxon>
        <taxon>Pseudomonadota</taxon>
        <taxon>Gammaproteobacteria</taxon>
        <taxon>Moraxellales</taxon>
        <taxon>Moraxellaceae</taxon>
        <taxon>Moraxella</taxon>
    </lineage>
</organism>
<comment type="function">
    <text evidence="3">Psychrophilic alcohol dehydrogenase that exhibits a wide range of substrate specificity, oxidizing mainly primary and secondary aliphatic alcohols, utilizing NAD(+) as a cosubstrate. In vitro, shows highest reaction rates for ethanol as a substrate and gradually decreases its reaction rates as the length and branching of the carbon chain of the alcohol substrates increase. To a lesser extent, is also able to reduce aldehydes and ketones. Do not catalyze the further oxidation of aldehydes to carboxylic acids. Cannot use NADP(+) instead of NAD(+).</text>
</comment>
<comment type="catalytic activity">
    <reaction evidence="2 3">
        <text>a primary alcohol + NAD(+) = an aldehyde + NADH + H(+)</text>
        <dbReference type="Rhea" id="RHEA:10736"/>
        <dbReference type="ChEBI" id="CHEBI:15378"/>
        <dbReference type="ChEBI" id="CHEBI:15734"/>
        <dbReference type="ChEBI" id="CHEBI:17478"/>
        <dbReference type="ChEBI" id="CHEBI:57540"/>
        <dbReference type="ChEBI" id="CHEBI:57945"/>
        <dbReference type="EC" id="1.1.1.1"/>
    </reaction>
    <physiologicalReaction direction="left-to-right" evidence="8">
        <dbReference type="Rhea" id="RHEA:10737"/>
    </physiologicalReaction>
</comment>
<comment type="catalytic activity">
    <reaction evidence="3">
        <text>a secondary alcohol + NAD(+) = a ketone + NADH + H(+)</text>
        <dbReference type="Rhea" id="RHEA:10740"/>
        <dbReference type="ChEBI" id="CHEBI:15378"/>
        <dbReference type="ChEBI" id="CHEBI:17087"/>
        <dbReference type="ChEBI" id="CHEBI:35681"/>
        <dbReference type="ChEBI" id="CHEBI:57540"/>
        <dbReference type="ChEBI" id="CHEBI:57945"/>
        <dbReference type="EC" id="1.1.1.1"/>
    </reaction>
    <physiologicalReaction direction="left-to-right" evidence="8">
        <dbReference type="Rhea" id="RHEA:10741"/>
    </physiologicalReaction>
</comment>
<comment type="catalytic activity">
    <reaction evidence="2 3">
        <text>ethanol + NAD(+) = acetaldehyde + NADH + H(+)</text>
        <dbReference type="Rhea" id="RHEA:25290"/>
        <dbReference type="ChEBI" id="CHEBI:15343"/>
        <dbReference type="ChEBI" id="CHEBI:15378"/>
        <dbReference type="ChEBI" id="CHEBI:16236"/>
        <dbReference type="ChEBI" id="CHEBI:57540"/>
        <dbReference type="ChEBI" id="CHEBI:57945"/>
        <dbReference type="EC" id="1.1.1.1"/>
    </reaction>
    <physiologicalReaction direction="left-to-right" evidence="8">
        <dbReference type="Rhea" id="RHEA:25291"/>
    </physiologicalReaction>
</comment>
<comment type="catalytic activity">
    <reaction evidence="3">
        <text>1-propanol + NAD(+) = propanal + NADH + H(+)</text>
        <dbReference type="Rhea" id="RHEA:50704"/>
        <dbReference type="ChEBI" id="CHEBI:15378"/>
        <dbReference type="ChEBI" id="CHEBI:17153"/>
        <dbReference type="ChEBI" id="CHEBI:28831"/>
        <dbReference type="ChEBI" id="CHEBI:57540"/>
        <dbReference type="ChEBI" id="CHEBI:57945"/>
    </reaction>
    <physiologicalReaction direction="left-to-right" evidence="8">
        <dbReference type="Rhea" id="RHEA:50705"/>
    </physiologicalReaction>
</comment>
<comment type="catalytic activity">
    <reaction evidence="3">
        <text>butan-1-ol + NAD(+) = butanal + NADH + H(+)</text>
        <dbReference type="Rhea" id="RHEA:33199"/>
        <dbReference type="ChEBI" id="CHEBI:15378"/>
        <dbReference type="ChEBI" id="CHEBI:15743"/>
        <dbReference type="ChEBI" id="CHEBI:28885"/>
        <dbReference type="ChEBI" id="CHEBI:57540"/>
        <dbReference type="ChEBI" id="CHEBI:57945"/>
    </reaction>
    <physiologicalReaction direction="left-to-right" evidence="8">
        <dbReference type="Rhea" id="RHEA:33200"/>
    </physiologicalReaction>
</comment>
<comment type="catalytic activity">
    <reaction evidence="3">
        <text>propan-2-ol + NAD(+) = acetone + NADH + H(+)</text>
        <dbReference type="Rhea" id="RHEA:41984"/>
        <dbReference type="ChEBI" id="CHEBI:15347"/>
        <dbReference type="ChEBI" id="CHEBI:15378"/>
        <dbReference type="ChEBI" id="CHEBI:17824"/>
        <dbReference type="ChEBI" id="CHEBI:57540"/>
        <dbReference type="ChEBI" id="CHEBI:57945"/>
    </reaction>
    <physiologicalReaction direction="left-to-right" evidence="8">
        <dbReference type="Rhea" id="RHEA:41985"/>
    </physiologicalReaction>
</comment>
<comment type="cofactor">
    <cofactor evidence="1 2">
        <name>Zn(2+)</name>
        <dbReference type="ChEBI" id="CHEBI:29105"/>
    </cofactor>
    <text evidence="1 2">Binds 2 Zn(2+) ions per subunit. One metal ion is located at the active-site region and has been termed catalytic, while the second metal ion has been termed structural.</text>
</comment>
<comment type="biophysicochemical properties">
    <kinetics>
        <KM evidence="3">0.58 mM for ethanol (at pH 7.4 and 25 degrees Celsius)</KM>
        <KM evidence="3">0.51 mM for propan-1-ol (at pH 7.4 and 25 degrees Celsius)</KM>
        <KM evidence="3">0.52 mM for butan-1-ol (at pH 7.4 and 25 degrees Celsius)</KM>
        <KM evidence="3">1.32 mM for propan-2-ol (at pH 7.4 and 25 degrees Celsius)</KM>
        <KM evidence="3">1.16 mM for acetone (at pH 6.0 and 25 degrees Celsius)</KM>
        <KM evidence="3">0.18 mM for NAD(+) (at pH 7.4 and 25 degrees Celsius)</KM>
        <KM evidence="3">0.23 mM for NADH (at pH 6.0 and 25 degrees Celsius)</KM>
        <KM evidence="2">0.7 mM for ethanol (at pH 7.4 and 30 degrees Celsius)</KM>
        <Vmax evidence="3">2.64 umol/min/mg enzyme for the oxidation of ethanol (at pH 7.4 and 25 degrees Celsius)</Vmax>
        <Vmax evidence="3">2.35 umol/min/mg enzyme for the oxidation of propan-1-ol (at pH 7.4 and 25 degrees Celsius)</Vmax>
        <Vmax evidence="3">2.34 umol/min/mg enzyme for the oxidation of butan-1-ol (at pH 7.4 and 25 degrees Celsius)</Vmax>
        <Vmax evidence="3">1.84 umol/min/mg enzyme for the oxidation of propan-2-ol (at pH 7.4 and 25 degrees Celsius)</Vmax>
        <Vmax evidence="3">1.97 umol/min/mg enzyme for the reduction of acetone (at pH 6.0 and 25 degrees Celsius)</Vmax>
        <text evidence="2 3">kcat is 549.1 min(-1) for the oxidation of ethanol (at pH 7.4 and 30 degrees Celsius). kcat is 488.8 min(-1) for the oxidation of propan-1-ol (at pH 7.4 and 30 degrees Celsius). kcat is 486.7 min(-1) for the oxidation of butan-1-ol (at pH 7.4 and 30 degrees Celsius). kcat is 382.7 min(-1) for the oxidation of propan-2-ol (at pH 7.4 and 30 degrees Celsius). kcat is 409.8 min(-1) for the reduction of acetone (at pH 6.0 and 30 degrees Celsius) (PubMed:9660191). kcat is 9.4 sec(-1) for the oxidation of ethanol (at pH 7.4 and 30 degrees Celsius) (PubMed:32596590).</text>
    </kinetics>
    <phDependence>
        <text evidence="3">Optimum pH is 7.4 and 6.0 for the oxidation of ethanol and reduction of acetone, respectively.</text>
    </phDependence>
    <temperatureDependence>
        <text evidence="2">Is a very thermostable, cold-adapted enzyme. Is active from 10 to at least 53 degrees Celsius and unfolds at 89 degrees Celsius.</text>
    </temperatureDependence>
</comment>
<comment type="subunit">
    <text evidence="1 2 3">Homotetramer.</text>
</comment>
<comment type="domain">
    <text evidence="2">Each subunit comprises two distinct structural domains: the catalytic domain (residues 1-150 and 288-340/345) and the nucleotide-binding domain (residues 151-287).</text>
</comment>
<comment type="similarity">
    <text evidence="6">Belongs to the zinc-containing alcohol dehydrogenase family.</text>
</comment>
<comment type="caution">
    <text evidence="7 8">The protein characterized in PubMed:9660191 corresponds to this sequence and not to the fragment sequence described in this article.</text>
</comment>